<accession>P20551</accession>
<protein>
    <recommendedName>
        <fullName>Uncharacterized 8.5 kDa protein</fullName>
    </recommendedName>
</protein>
<keyword id="KW-1185">Reference proteome</keyword>
<dbReference type="EMBL" id="M35027">
    <property type="protein sequence ID" value="AAA48098.1"/>
    <property type="molecule type" value="Genomic_DNA"/>
</dbReference>
<dbReference type="PIR" id="E42516">
    <property type="entry name" value="E42516"/>
</dbReference>
<dbReference type="Proteomes" id="UP000008269">
    <property type="component" value="Segment"/>
</dbReference>
<organismHost>
    <name type="scientific">Homo sapiens</name>
    <name type="common">Human</name>
    <dbReference type="NCBI Taxonomy" id="9606"/>
</organismHost>
<name>YVDB_VACCC</name>
<reference key="1">
    <citation type="journal article" date="1990" name="Virology">
        <title>The complete DNA sequence of vaccinia virus.</title>
        <authorList>
            <person name="Goebel S.J."/>
            <person name="Johnson G.P."/>
            <person name="Perkus M.E."/>
            <person name="Davis S.W."/>
            <person name="Winslow J.P."/>
            <person name="Paoletti E."/>
        </authorList>
    </citation>
    <scope>NUCLEOTIDE SEQUENCE [LARGE SCALE GENOMIC DNA]</scope>
</reference>
<reference key="2">
    <citation type="journal article" date="1990" name="Virology">
        <title>Appendix to 'The complete DNA sequence of vaccinia virus'.</title>
        <authorList>
            <person name="Goebel S.J."/>
            <person name="Johnson G.P."/>
            <person name="Perkus M.E."/>
            <person name="Davis S.W."/>
            <person name="Winslow J.P."/>
            <person name="Paoletti E."/>
        </authorList>
    </citation>
    <scope>COMPLETE GENOME</scope>
</reference>
<organism>
    <name type="scientific">Vaccinia virus (strain Copenhagen)</name>
    <name type="common">VACV</name>
    <dbReference type="NCBI Taxonomy" id="10249"/>
    <lineage>
        <taxon>Viruses</taxon>
        <taxon>Varidnaviria</taxon>
        <taxon>Bamfordvirae</taxon>
        <taxon>Nucleocytoviricota</taxon>
        <taxon>Pokkesviricetes</taxon>
        <taxon>Chitovirales</taxon>
        <taxon>Poxviridae</taxon>
        <taxon>Chordopoxvirinae</taxon>
        <taxon>Orthopoxvirus</taxon>
        <taxon>Vaccinia virus</taxon>
    </lineage>
</organism>
<sequence>MGSDIPVLNALNNSNRAIFVPIGPSNCGYSVLLIDILILLSGNRGSTSSKNKSLITSGLFINKNLAILYILLLSNLAIVL</sequence>
<feature type="chain" id="PRO_0000099686" description="Uncharacterized 8.5 kDa protein">
    <location>
        <begin position="1"/>
        <end position="80"/>
    </location>
</feature>
<proteinExistence type="predicted"/>
<gene>
    <name type="ORF">D ORF B</name>
</gene>